<organism>
    <name type="scientific">Coriandrum sativum</name>
    <name type="common">Coriander</name>
    <name type="synonym">Chinese parsley</name>
    <dbReference type="NCBI Taxonomy" id="4047"/>
    <lineage>
        <taxon>Eukaryota</taxon>
        <taxon>Viridiplantae</taxon>
        <taxon>Streptophyta</taxon>
        <taxon>Embryophyta</taxon>
        <taxon>Tracheophyta</taxon>
        <taxon>Spermatophyta</taxon>
        <taxon>Magnoliopsida</taxon>
        <taxon>eudicotyledons</taxon>
        <taxon>Gunneridae</taxon>
        <taxon>Pentapetalae</taxon>
        <taxon>asterids</taxon>
        <taxon>campanulids</taxon>
        <taxon>Apiales</taxon>
        <taxon>Apiaceae</taxon>
        <taxon>Apioideae</taxon>
        <taxon>apioid superclade</taxon>
        <taxon>Coriandreae</taxon>
        <taxon>Coriandrum</taxon>
    </lineage>
</organism>
<gene>
    <name type="primary">FATA</name>
</gene>
<protein>
    <recommendedName>
        <fullName>Oleoyl-acyl carrier protein thioesterase, chloroplastic</fullName>
        <ecNumber>3.1.2.14</ecNumber>
    </recommendedName>
    <alternativeName>
        <fullName>18:0-acyl-carrier protein thioesterase</fullName>
        <shortName>18:0-ACP thioesterase</shortName>
    </alternativeName>
    <alternativeName>
        <fullName>Acyl-[acyl-carrier-protein] hydrolase</fullName>
    </alternativeName>
</protein>
<evidence type="ECO:0000255" key="1"/>
<evidence type="ECO:0000305" key="2"/>
<comment type="function">
    <text>Plays an essential role in chain termination during de novo fatty acid synthesis. High thioesterase activity for oleoyl-ACP versus other acyl-ACPs.</text>
</comment>
<comment type="catalytic activity">
    <reaction>
        <text>(9Z)-octadecenoyl-[ACP] + H2O = (9Z)-octadecenoate + holo-[ACP] + H(+)</text>
        <dbReference type="Rhea" id="RHEA:15057"/>
        <dbReference type="Rhea" id="RHEA-COMP:9685"/>
        <dbReference type="Rhea" id="RHEA-COMP:9924"/>
        <dbReference type="ChEBI" id="CHEBI:15377"/>
        <dbReference type="ChEBI" id="CHEBI:15378"/>
        <dbReference type="ChEBI" id="CHEBI:30823"/>
        <dbReference type="ChEBI" id="CHEBI:64479"/>
        <dbReference type="ChEBI" id="CHEBI:78783"/>
        <dbReference type="EC" id="3.1.2.14"/>
    </reaction>
</comment>
<comment type="subcellular location">
    <subcellularLocation>
        <location>Plastid</location>
        <location>Chloroplast</location>
    </subcellularLocation>
</comment>
<comment type="similarity">
    <text evidence="2">Belongs to the acyl-ACP thioesterase family.</text>
</comment>
<sequence length="369" mass="42348">VYPHFKTPIQCRFLTSDSISIRRRTAVSRWRSPTFSANYNGVNAQVLGVLKQEQKEIEEEKRSSSLAEKLRLGSLTEDGLSYKEKFIVRCYEVGINKTATVETIANLLQEVGGNHAQSVGFSTDGFATTPTMRKLHLIWVTARMHIEIYRYPAWSDVVEIETWCQSEGRIGTRRDWIIKDFATDEVIGRATSKWVMMNQDTRRLQKVSDDVRDEYLVFCPKTPRLSFPEENNKSLKKISKLEDPAQHSRLGLSPRRADLDMNQHVNNVAYIGWVLESIPKEVLYTHELETITLDYRRECQHDDVVDSLTSPEVDEDTAVTKIIGTNGHAAAATEARDDSLKFLHFLRVSGQGLEINRGRTEWRKKSEKR</sequence>
<proteinExistence type="evidence at transcript level"/>
<accession>Q42712</accession>
<dbReference type="EC" id="3.1.2.14"/>
<dbReference type="EMBL" id="L20978">
    <property type="protein sequence ID" value="AAA19864.1"/>
    <property type="molecule type" value="mRNA"/>
</dbReference>
<dbReference type="SMR" id="Q42712"/>
<dbReference type="GO" id="GO:0009507">
    <property type="term" value="C:chloroplast"/>
    <property type="evidence" value="ECO:0007669"/>
    <property type="project" value="UniProtKB-SubCell"/>
</dbReference>
<dbReference type="GO" id="GO:0000036">
    <property type="term" value="F:acyl carrier activity"/>
    <property type="evidence" value="ECO:0007669"/>
    <property type="project" value="TreeGrafter"/>
</dbReference>
<dbReference type="GO" id="GO:0016297">
    <property type="term" value="F:fatty acyl-[ACP] hydrolase activity"/>
    <property type="evidence" value="ECO:0007669"/>
    <property type="project" value="UniProtKB-EC"/>
</dbReference>
<dbReference type="CDD" id="cd00586">
    <property type="entry name" value="4HBT"/>
    <property type="match status" value="1"/>
</dbReference>
<dbReference type="FunFam" id="3.10.129.10:FF:000014">
    <property type="entry name" value="Acyl-[acyl-carrier-protein] hydrolase"/>
    <property type="match status" value="1"/>
</dbReference>
<dbReference type="Gene3D" id="3.10.129.10">
    <property type="entry name" value="Hotdog Thioesterase"/>
    <property type="match status" value="1"/>
</dbReference>
<dbReference type="InterPro" id="IPR049427">
    <property type="entry name" value="Acyl-ACP_TE_C"/>
</dbReference>
<dbReference type="InterPro" id="IPR002864">
    <property type="entry name" value="Acyl-ACP_thioesterase_NHD"/>
</dbReference>
<dbReference type="InterPro" id="IPR045023">
    <property type="entry name" value="FATA/B"/>
</dbReference>
<dbReference type="InterPro" id="IPR029069">
    <property type="entry name" value="HotDog_dom_sf"/>
</dbReference>
<dbReference type="PANTHER" id="PTHR31727">
    <property type="entry name" value="OLEOYL-ACYL CARRIER PROTEIN THIOESTERASE 1, CHLOROPLASTIC"/>
    <property type="match status" value="1"/>
</dbReference>
<dbReference type="PANTHER" id="PTHR31727:SF6">
    <property type="entry name" value="OLEOYL-ACYL CARRIER PROTEIN THIOESTERASE 1, CHLOROPLASTIC"/>
    <property type="match status" value="1"/>
</dbReference>
<dbReference type="Pfam" id="PF01643">
    <property type="entry name" value="Acyl-ACP_TE"/>
    <property type="match status" value="1"/>
</dbReference>
<dbReference type="Pfam" id="PF20791">
    <property type="entry name" value="Acyl-ACP_TE_C"/>
    <property type="match status" value="1"/>
</dbReference>
<dbReference type="SUPFAM" id="SSF54637">
    <property type="entry name" value="Thioesterase/thiol ester dehydrase-isomerase"/>
    <property type="match status" value="2"/>
</dbReference>
<keyword id="KW-0150">Chloroplast</keyword>
<keyword id="KW-0275">Fatty acid biosynthesis</keyword>
<keyword id="KW-0276">Fatty acid metabolism</keyword>
<keyword id="KW-0378">Hydrolase</keyword>
<keyword id="KW-0444">Lipid biosynthesis</keyword>
<keyword id="KW-0443">Lipid metabolism</keyword>
<keyword id="KW-0934">Plastid</keyword>
<keyword id="KW-0809">Transit peptide</keyword>
<reference key="1">
    <citation type="journal article" date="1994" name="Biochim. Biophys. Acta">
        <title>Cloning and expression in Escherichia coli of a cDNA coding for the oleoyl-acyl carrier protein thioesterase from coriander (Coriandrum sativum L.).</title>
        <authorList>
            <person name="Dormann P."/>
            <person name="Kridl J.C."/>
            <person name="Ohlrogge J.B."/>
        </authorList>
    </citation>
    <scope>NUCLEOTIDE SEQUENCE [MRNA]</scope>
    <source>
        <tissue>Seed endosperm</tissue>
    </source>
</reference>
<feature type="transit peptide" description="Chloroplast" evidence="1">
    <location>
        <begin position="1" status="less than"/>
        <end status="unknown"/>
    </location>
</feature>
<feature type="chain" id="PRO_0000000595" description="Oleoyl-acyl carrier protein thioesterase, chloroplastic">
    <location>
        <begin status="unknown"/>
        <end position="369"/>
    </location>
</feature>
<feature type="active site" evidence="1">
    <location>
        <position position="262"/>
    </location>
</feature>
<feature type="active site" evidence="1">
    <location>
        <position position="264"/>
    </location>
</feature>
<feature type="active site" evidence="1">
    <location>
        <position position="299"/>
    </location>
</feature>
<feature type="non-terminal residue">
    <location>
        <position position="1"/>
    </location>
</feature>
<name>FATA_CORSA</name>